<organism>
    <name type="scientific">Aspergillus clavatus (strain ATCC 1007 / CBS 513.65 / DSM 816 / NCTC 3887 / NRRL 1 / QM 1276 / 107)</name>
    <dbReference type="NCBI Taxonomy" id="344612"/>
    <lineage>
        <taxon>Eukaryota</taxon>
        <taxon>Fungi</taxon>
        <taxon>Dikarya</taxon>
        <taxon>Ascomycota</taxon>
        <taxon>Pezizomycotina</taxon>
        <taxon>Eurotiomycetes</taxon>
        <taxon>Eurotiomycetidae</taxon>
        <taxon>Eurotiales</taxon>
        <taxon>Aspergillaceae</taxon>
        <taxon>Aspergillus</taxon>
        <taxon>Aspergillus subgen. Fumigati</taxon>
    </lineage>
</organism>
<protein>
    <recommendedName>
        <fullName evidence="1">Flap endonuclease 1</fullName>
        <shortName evidence="1">FEN-1</shortName>
        <ecNumber evidence="1">3.1.-.-</ecNumber>
    </recommendedName>
    <alternativeName>
        <fullName evidence="1">Flap structure-specific endonuclease 1</fullName>
    </alternativeName>
</protein>
<keyword id="KW-0227">DNA damage</keyword>
<keyword id="KW-0234">DNA repair</keyword>
<keyword id="KW-0235">DNA replication</keyword>
<keyword id="KW-0255">Endonuclease</keyword>
<keyword id="KW-0269">Exonuclease</keyword>
<keyword id="KW-0378">Hydrolase</keyword>
<keyword id="KW-0460">Magnesium</keyword>
<keyword id="KW-0479">Metal-binding</keyword>
<keyword id="KW-0496">Mitochondrion</keyword>
<keyword id="KW-0540">Nuclease</keyword>
<keyword id="KW-0539">Nucleus</keyword>
<keyword id="KW-0597">Phosphoprotein</keyword>
<keyword id="KW-1185">Reference proteome</keyword>
<reference key="1">
    <citation type="journal article" date="2008" name="PLoS Genet.">
        <title>Genomic islands in the pathogenic filamentous fungus Aspergillus fumigatus.</title>
        <authorList>
            <person name="Fedorova N.D."/>
            <person name="Khaldi N."/>
            <person name="Joardar V.S."/>
            <person name="Maiti R."/>
            <person name="Amedeo P."/>
            <person name="Anderson M.J."/>
            <person name="Crabtree J."/>
            <person name="Silva J.C."/>
            <person name="Badger J.H."/>
            <person name="Albarraq A."/>
            <person name="Angiuoli S."/>
            <person name="Bussey H."/>
            <person name="Bowyer P."/>
            <person name="Cotty P.J."/>
            <person name="Dyer P.S."/>
            <person name="Egan A."/>
            <person name="Galens K."/>
            <person name="Fraser-Liggett C.M."/>
            <person name="Haas B.J."/>
            <person name="Inman J.M."/>
            <person name="Kent R."/>
            <person name="Lemieux S."/>
            <person name="Malavazi I."/>
            <person name="Orvis J."/>
            <person name="Roemer T."/>
            <person name="Ronning C.M."/>
            <person name="Sundaram J.P."/>
            <person name="Sutton G."/>
            <person name="Turner G."/>
            <person name="Venter J.C."/>
            <person name="White O.R."/>
            <person name="Whitty B.R."/>
            <person name="Youngman P."/>
            <person name="Wolfe K.H."/>
            <person name="Goldman G.H."/>
            <person name="Wortman J.R."/>
            <person name="Jiang B."/>
            <person name="Denning D.W."/>
            <person name="Nierman W.C."/>
        </authorList>
    </citation>
    <scope>NUCLEOTIDE SEQUENCE [LARGE SCALE GENOMIC DNA]</scope>
    <source>
        <strain>ATCC 1007 / CBS 513.65 / DSM 816 / NCTC 3887 / NRRL 1 / QM 1276 / 107</strain>
    </source>
</reference>
<comment type="function">
    <text evidence="1">Structure-specific nuclease with 5'-flap endonuclease and 5'-3' exonuclease activities involved in DNA replication and repair. During DNA replication, cleaves the 5'-overhanging flap structure that is generated by displacement synthesis when DNA polymerase encounters the 5'-end of a downstream Okazaki fragment. It enters the flap from the 5'-end and then tracks to cleave the flap base, leaving a nick for ligation. Also involved in the long patch base excision repair (LP-BER) pathway, by cleaving within the apurinic/apyrimidinic (AP) site-terminated flap. Acts as a genome stabilization factor that prevents flaps from equilibrating into structures that lead to duplications and deletions. Also possesses 5'-3' exonuclease activity on nicked or gapped double-stranded DNA, and exhibits RNase H activity. Also involved in replication and repair of rDNA and in repairing mitochondrial DNA.</text>
</comment>
<comment type="cofactor">
    <cofactor evidence="1">
        <name>Mg(2+)</name>
        <dbReference type="ChEBI" id="CHEBI:18420"/>
    </cofactor>
    <text evidence="1">Binds 2 magnesium ions per subunit. They probably participate in the reaction catalyzed by the enzyme. May bind an additional third magnesium ion after substrate binding.</text>
</comment>
<comment type="subunit">
    <text evidence="1">Interacts with PCNA. Three molecules of fen1 bind to one PCNA trimer with each molecule binding to one PCNA monomer. PCNA stimulates the nuclease activity without altering cleavage specificity.</text>
</comment>
<comment type="subcellular location">
    <subcellularLocation>
        <location evidence="1">Nucleus</location>
        <location evidence="1">Nucleolus</location>
    </subcellularLocation>
    <subcellularLocation>
        <location evidence="1">Nucleus</location>
        <location evidence="1">Nucleoplasm</location>
    </subcellularLocation>
    <subcellularLocation>
        <location evidence="1">Mitochondrion</location>
    </subcellularLocation>
    <text evidence="1">Resides mostly in the nucleoli and relocalizes to the nucleoplasm upon DNA damage.</text>
</comment>
<comment type="PTM">
    <text evidence="1">Phosphorylated. Phosphorylation upon DNA damage induces relocalization to the nuclear plasma.</text>
</comment>
<comment type="similarity">
    <text evidence="1">Belongs to the XPG/RAD2 endonuclease family. FEN1 subfamily.</text>
</comment>
<comment type="sequence caution" evidence="3">
    <conflict type="erroneous gene model prediction">
        <sequence resource="EMBL-CDS" id="EAW09199"/>
    </conflict>
</comment>
<proteinExistence type="inferred from homology"/>
<evidence type="ECO:0000255" key="1">
    <source>
        <dbReference type="HAMAP-Rule" id="MF_03140"/>
    </source>
</evidence>
<evidence type="ECO:0000256" key="2">
    <source>
        <dbReference type="SAM" id="MobiDB-lite"/>
    </source>
</evidence>
<evidence type="ECO:0000305" key="3"/>
<accession>A1CJ75</accession>
<sequence>MGIKHLFQVIQENAPDAVKSGDIKNHFGRKVAIDASMSIYSFLIAVRSEGQQLMSESGETTSHLMGMFYRTLRMVDNGIKPLYVFDGAPPKLKSGELAKRTARKAEATEAHEEAKETGTAEEIEKFSRRTVRVTREHNAECKKLLKLMGVPYIDAPTEAEAQCAVLARAGKVYAAASEDMDTLCFEAPILLRHLTFSEQRKEPIQEIHLNRVLEGLDMDRSQFIDMCILLGCDYLEPIPKVGPNTALKLIREHGSLEKVVEAIESDPKKKYVIPEDWPYQDARELFHHPDVRAADHPECDFKWEAPDIEALVDFLVKDKGFNEDRVRNGAARLQKNLKTAQQSRLEGFFKPVAKTDAEKASLKRKHDEKLQEQKKRKKEEAKAKKEAKAKPRGAA</sequence>
<name>FEN1_ASPCL</name>
<feature type="chain" id="PRO_0000403560" description="Flap endonuclease 1">
    <location>
        <begin position="1"/>
        <end position="395"/>
    </location>
</feature>
<feature type="region of interest" description="N-domain">
    <location>
        <begin position="1"/>
        <end position="104"/>
    </location>
</feature>
<feature type="region of interest" description="I-domain">
    <location>
        <begin position="122"/>
        <end position="253"/>
    </location>
</feature>
<feature type="region of interest" description="Interaction with PCNA" evidence="1">
    <location>
        <begin position="341"/>
        <end position="349"/>
    </location>
</feature>
<feature type="region of interest" description="Disordered" evidence="2">
    <location>
        <begin position="356"/>
        <end position="395"/>
    </location>
</feature>
<feature type="compositionally biased region" description="Basic and acidic residues" evidence="2">
    <location>
        <begin position="356"/>
        <end position="389"/>
    </location>
</feature>
<feature type="binding site" evidence="1">
    <location>
        <position position="34"/>
    </location>
    <ligand>
        <name>Mg(2+)</name>
        <dbReference type="ChEBI" id="CHEBI:18420"/>
        <label>1</label>
    </ligand>
</feature>
<feature type="binding site" evidence="1">
    <location>
        <position position="47"/>
    </location>
    <ligand>
        <name>DNA</name>
        <dbReference type="ChEBI" id="CHEBI:16991"/>
    </ligand>
</feature>
<feature type="binding site" evidence="1">
    <location>
        <position position="70"/>
    </location>
    <ligand>
        <name>DNA</name>
        <dbReference type="ChEBI" id="CHEBI:16991"/>
    </ligand>
</feature>
<feature type="binding site" evidence="1">
    <location>
        <position position="86"/>
    </location>
    <ligand>
        <name>Mg(2+)</name>
        <dbReference type="ChEBI" id="CHEBI:18420"/>
        <label>1</label>
    </ligand>
</feature>
<feature type="binding site" evidence="1">
    <location>
        <position position="158"/>
    </location>
    <ligand>
        <name>DNA</name>
        <dbReference type="ChEBI" id="CHEBI:16991"/>
    </ligand>
</feature>
<feature type="binding site" evidence="1">
    <location>
        <position position="158"/>
    </location>
    <ligand>
        <name>Mg(2+)</name>
        <dbReference type="ChEBI" id="CHEBI:18420"/>
        <label>1</label>
    </ligand>
</feature>
<feature type="binding site" evidence="1">
    <location>
        <position position="160"/>
    </location>
    <ligand>
        <name>Mg(2+)</name>
        <dbReference type="ChEBI" id="CHEBI:18420"/>
        <label>1</label>
    </ligand>
</feature>
<feature type="binding site" evidence="1">
    <location>
        <position position="179"/>
    </location>
    <ligand>
        <name>Mg(2+)</name>
        <dbReference type="ChEBI" id="CHEBI:18420"/>
        <label>2</label>
    </ligand>
</feature>
<feature type="binding site" evidence="1">
    <location>
        <position position="181"/>
    </location>
    <ligand>
        <name>Mg(2+)</name>
        <dbReference type="ChEBI" id="CHEBI:18420"/>
        <label>2</label>
    </ligand>
</feature>
<feature type="binding site" evidence="1">
    <location>
        <position position="231"/>
    </location>
    <ligand>
        <name>DNA</name>
        <dbReference type="ChEBI" id="CHEBI:16991"/>
    </ligand>
</feature>
<feature type="binding site" evidence="1">
    <location>
        <position position="233"/>
    </location>
    <ligand>
        <name>DNA</name>
        <dbReference type="ChEBI" id="CHEBI:16991"/>
    </ligand>
</feature>
<feature type="binding site" evidence="1">
    <location>
        <position position="233"/>
    </location>
    <ligand>
        <name>Mg(2+)</name>
        <dbReference type="ChEBI" id="CHEBI:18420"/>
        <label>2</label>
    </ligand>
</feature>
<dbReference type="EC" id="3.1.-.-" evidence="1"/>
<dbReference type="EMBL" id="DS027056">
    <property type="protein sequence ID" value="EAW09199.1"/>
    <property type="status" value="ALT_SEQ"/>
    <property type="molecule type" value="Genomic_DNA"/>
</dbReference>
<dbReference type="RefSeq" id="XP_001270625.1">
    <property type="nucleotide sequence ID" value="XM_001270624.1"/>
</dbReference>
<dbReference type="SMR" id="A1CJ75"/>
<dbReference type="STRING" id="344612.A1CJ75"/>
<dbReference type="GeneID" id="4703446"/>
<dbReference type="KEGG" id="act:ACLA_034020"/>
<dbReference type="eggNOG" id="KOG2519">
    <property type="taxonomic scope" value="Eukaryota"/>
</dbReference>
<dbReference type="OrthoDB" id="1937206at2759"/>
<dbReference type="Proteomes" id="UP000006701">
    <property type="component" value="Unassembled WGS sequence"/>
</dbReference>
<dbReference type="GO" id="GO:0005739">
    <property type="term" value="C:mitochondrion"/>
    <property type="evidence" value="ECO:0007669"/>
    <property type="project" value="UniProtKB-SubCell"/>
</dbReference>
<dbReference type="GO" id="GO:0005730">
    <property type="term" value="C:nucleolus"/>
    <property type="evidence" value="ECO:0007669"/>
    <property type="project" value="UniProtKB-SubCell"/>
</dbReference>
<dbReference type="GO" id="GO:0005654">
    <property type="term" value="C:nucleoplasm"/>
    <property type="evidence" value="ECO:0007669"/>
    <property type="project" value="UniProtKB-SubCell"/>
</dbReference>
<dbReference type="GO" id="GO:0008409">
    <property type="term" value="F:5'-3' exonuclease activity"/>
    <property type="evidence" value="ECO:0007669"/>
    <property type="project" value="UniProtKB-UniRule"/>
</dbReference>
<dbReference type="GO" id="GO:0017108">
    <property type="term" value="F:5'-flap endonuclease activity"/>
    <property type="evidence" value="ECO:0007669"/>
    <property type="project" value="UniProtKB-UniRule"/>
</dbReference>
<dbReference type="GO" id="GO:0003677">
    <property type="term" value="F:DNA binding"/>
    <property type="evidence" value="ECO:0007669"/>
    <property type="project" value="UniProtKB-UniRule"/>
</dbReference>
<dbReference type="GO" id="GO:0000287">
    <property type="term" value="F:magnesium ion binding"/>
    <property type="evidence" value="ECO:0007669"/>
    <property type="project" value="UniProtKB-UniRule"/>
</dbReference>
<dbReference type="GO" id="GO:0006284">
    <property type="term" value="P:base-excision repair"/>
    <property type="evidence" value="ECO:0007669"/>
    <property type="project" value="UniProtKB-UniRule"/>
</dbReference>
<dbReference type="GO" id="GO:0043137">
    <property type="term" value="P:DNA replication, removal of RNA primer"/>
    <property type="evidence" value="ECO:0007669"/>
    <property type="project" value="UniProtKB-UniRule"/>
</dbReference>
<dbReference type="CDD" id="cd09907">
    <property type="entry name" value="H3TH_FEN1-Euk"/>
    <property type="match status" value="1"/>
</dbReference>
<dbReference type="CDD" id="cd09867">
    <property type="entry name" value="PIN_FEN1"/>
    <property type="match status" value="1"/>
</dbReference>
<dbReference type="FunFam" id="1.10.150.20:FF:000009">
    <property type="entry name" value="Flap endonuclease 1"/>
    <property type="match status" value="1"/>
</dbReference>
<dbReference type="FunFam" id="3.40.50.1010:FF:000003">
    <property type="entry name" value="Flap endonuclease 1"/>
    <property type="match status" value="1"/>
</dbReference>
<dbReference type="Gene3D" id="1.10.150.20">
    <property type="entry name" value="5' to 3' exonuclease, C-terminal subdomain"/>
    <property type="match status" value="1"/>
</dbReference>
<dbReference type="Gene3D" id="3.40.50.1010">
    <property type="entry name" value="5'-nuclease"/>
    <property type="match status" value="1"/>
</dbReference>
<dbReference type="HAMAP" id="MF_00614">
    <property type="entry name" value="Fen"/>
    <property type="match status" value="1"/>
</dbReference>
<dbReference type="InterPro" id="IPR036279">
    <property type="entry name" value="5-3_exonuclease_C_sf"/>
</dbReference>
<dbReference type="InterPro" id="IPR023426">
    <property type="entry name" value="Flap_endonuc"/>
</dbReference>
<dbReference type="InterPro" id="IPR008918">
    <property type="entry name" value="HhH2"/>
</dbReference>
<dbReference type="InterPro" id="IPR029060">
    <property type="entry name" value="PIN-like_dom_sf"/>
</dbReference>
<dbReference type="InterPro" id="IPR006086">
    <property type="entry name" value="XPG-I_dom"/>
</dbReference>
<dbReference type="InterPro" id="IPR006084">
    <property type="entry name" value="XPG/Rad2"/>
</dbReference>
<dbReference type="InterPro" id="IPR019974">
    <property type="entry name" value="XPG_CS"/>
</dbReference>
<dbReference type="InterPro" id="IPR006085">
    <property type="entry name" value="XPG_DNA_repair_N"/>
</dbReference>
<dbReference type="PANTHER" id="PTHR11081:SF9">
    <property type="entry name" value="FLAP ENDONUCLEASE 1"/>
    <property type="match status" value="1"/>
</dbReference>
<dbReference type="PANTHER" id="PTHR11081">
    <property type="entry name" value="FLAP ENDONUCLEASE FAMILY MEMBER"/>
    <property type="match status" value="1"/>
</dbReference>
<dbReference type="Pfam" id="PF00867">
    <property type="entry name" value="XPG_I"/>
    <property type="match status" value="1"/>
</dbReference>
<dbReference type="Pfam" id="PF00752">
    <property type="entry name" value="XPG_N"/>
    <property type="match status" value="1"/>
</dbReference>
<dbReference type="PRINTS" id="PR00853">
    <property type="entry name" value="XPGRADSUPER"/>
</dbReference>
<dbReference type="SMART" id="SM00279">
    <property type="entry name" value="HhH2"/>
    <property type="match status" value="1"/>
</dbReference>
<dbReference type="SMART" id="SM00484">
    <property type="entry name" value="XPGI"/>
    <property type="match status" value="1"/>
</dbReference>
<dbReference type="SMART" id="SM00485">
    <property type="entry name" value="XPGN"/>
    <property type="match status" value="1"/>
</dbReference>
<dbReference type="SUPFAM" id="SSF47807">
    <property type="entry name" value="5' to 3' exonuclease, C-terminal subdomain"/>
    <property type="match status" value="1"/>
</dbReference>
<dbReference type="SUPFAM" id="SSF88723">
    <property type="entry name" value="PIN domain-like"/>
    <property type="match status" value="1"/>
</dbReference>
<dbReference type="PROSITE" id="PS00841">
    <property type="entry name" value="XPG_1"/>
    <property type="match status" value="1"/>
</dbReference>
<dbReference type="PROSITE" id="PS00842">
    <property type="entry name" value="XPG_2"/>
    <property type="match status" value="1"/>
</dbReference>
<gene>
    <name type="primary">fen1</name>
    <name type="ORF">ACLA_034020</name>
</gene>